<name>Y997_SODGM</name>
<organism>
    <name type="scientific">Sodalis glossinidius (strain morsitans)</name>
    <dbReference type="NCBI Taxonomy" id="343509"/>
    <lineage>
        <taxon>Bacteria</taxon>
        <taxon>Pseudomonadati</taxon>
        <taxon>Pseudomonadota</taxon>
        <taxon>Gammaproteobacteria</taxon>
        <taxon>Enterobacterales</taxon>
        <taxon>Bruguierivoracaceae</taxon>
        <taxon>Sodalis</taxon>
    </lineage>
</organism>
<sequence length="60" mass="6801">MDHRLLEIVACPVCNGKFYYNKERQELICKSDALAYPLCDGIPVLLESEARAIKLDETNS</sequence>
<dbReference type="EMBL" id="AP008232">
    <property type="protein sequence ID" value="BAE74272.1"/>
    <property type="molecule type" value="Genomic_DNA"/>
</dbReference>
<dbReference type="RefSeq" id="WP_011410858.1">
    <property type="nucleotide sequence ID" value="NC_007712.1"/>
</dbReference>
<dbReference type="SMR" id="Q2NUA3"/>
<dbReference type="STRING" id="343509.SG0997"/>
<dbReference type="KEGG" id="sgl:SG0997"/>
<dbReference type="eggNOG" id="COG2835">
    <property type="taxonomic scope" value="Bacteria"/>
</dbReference>
<dbReference type="HOGENOM" id="CLU_155659_3_1_6"/>
<dbReference type="OrthoDB" id="9812205at2"/>
<dbReference type="BioCyc" id="SGLO343509:SGP1_RS08525-MONOMER"/>
<dbReference type="Proteomes" id="UP000001932">
    <property type="component" value="Chromosome"/>
</dbReference>
<dbReference type="GO" id="GO:0005829">
    <property type="term" value="C:cytosol"/>
    <property type="evidence" value="ECO:0007669"/>
    <property type="project" value="TreeGrafter"/>
</dbReference>
<dbReference type="FunFam" id="2.20.25.10:FF:000002">
    <property type="entry name" value="UPF0434 protein YcaR"/>
    <property type="match status" value="1"/>
</dbReference>
<dbReference type="Gene3D" id="2.20.25.10">
    <property type="match status" value="1"/>
</dbReference>
<dbReference type="HAMAP" id="MF_01187">
    <property type="entry name" value="UPF0434"/>
    <property type="match status" value="1"/>
</dbReference>
<dbReference type="InterPro" id="IPR005651">
    <property type="entry name" value="Trm112-like"/>
</dbReference>
<dbReference type="PANTHER" id="PTHR33505:SF4">
    <property type="entry name" value="PROTEIN PREY, MITOCHONDRIAL"/>
    <property type="match status" value="1"/>
</dbReference>
<dbReference type="PANTHER" id="PTHR33505">
    <property type="entry name" value="ZGC:162634"/>
    <property type="match status" value="1"/>
</dbReference>
<dbReference type="Pfam" id="PF03966">
    <property type="entry name" value="Trm112p"/>
    <property type="match status" value="1"/>
</dbReference>
<dbReference type="SUPFAM" id="SSF158997">
    <property type="entry name" value="Trm112p-like"/>
    <property type="match status" value="1"/>
</dbReference>
<evidence type="ECO:0000255" key="1">
    <source>
        <dbReference type="HAMAP-Rule" id="MF_01187"/>
    </source>
</evidence>
<proteinExistence type="inferred from homology"/>
<gene>
    <name type="ordered locus">SG0997</name>
</gene>
<feature type="chain" id="PRO_0000291177" description="UPF0434 protein SG0997">
    <location>
        <begin position="1"/>
        <end position="60"/>
    </location>
</feature>
<comment type="similarity">
    <text evidence="1">Belongs to the UPF0434 family.</text>
</comment>
<protein>
    <recommendedName>
        <fullName evidence="1">UPF0434 protein SG0997</fullName>
    </recommendedName>
</protein>
<accession>Q2NUA3</accession>
<reference key="1">
    <citation type="journal article" date="2006" name="Genome Res.">
        <title>Massive genome erosion and functional adaptations provide insights into the symbiotic lifestyle of Sodalis glossinidius in the tsetse host.</title>
        <authorList>
            <person name="Toh H."/>
            <person name="Weiss B.L."/>
            <person name="Perkin S.A.H."/>
            <person name="Yamashita A."/>
            <person name="Oshima K."/>
            <person name="Hattori M."/>
            <person name="Aksoy S."/>
        </authorList>
    </citation>
    <scope>NUCLEOTIDE SEQUENCE [LARGE SCALE GENOMIC DNA]</scope>
    <source>
        <strain>morsitans</strain>
    </source>
</reference>